<accession>O89941</accession>
<comment type="function">
    <text evidence="2">Counteracts the innate antiviral activity of host APOBEC3F and APOBEC3G by promoting their ubiquitination and degradation. Acts as a substrate recognition component of an E3 ubiquitin-protein ligase complex: mechanistically, Vif hijacks a host cullin-5-RING E3 ubiquitin-protein ligase complex (ECS complex) and the transcription coactivator CBFB/CBF-beta to form an active E3 ubiquitin-protein ligase complex that targets APOBEC3G and APOBEC3F for polyubiquitination, leading to their degradation by the proteasome. Vif interaction with APOBEC3G also blocks its cytidine deaminase activity in a proteasome-independent manner, suggesting a dual inhibitory mechanism. May interact directly with APOBEC3G mRNA in order to inhibit its translation. Association with CBFB/CBF-beta also inhibits the transcription coactivator activity of CBFB/CBF-beta. Seems to play a role in viral morphology by affecting the stability of the viral nucleoprotein core. Finally, Vif also contributes to the G2 cell cycle arrest observed in HIV infected cells.</text>
</comment>
<comment type="subunit">
    <text evidence="1">Homomultimer; in vitro and presumably in vivo. Interacts with viral RNA and Pr55Gag precursor; these interactions mediate Vif incorporation into the virion. Interacts with the viral reverse transcriptase. Forms cullin-5-RING E3 ubiquitin-protein ligase complex (ECS complex) by interacting with host CUL5, RBX2, elongin BC complex (ELOB and ELOC) and CBFB/CBF-beta. Within the ECS complex, Vif interacts directly with host CUL5, ELOC and APOBEC (APOBEC3F and APOBEC3G) substrates. The ECS complex also contains some single-stranded RNA (ssRNA) that acts as a glue that bridges Vif with APOBEC (APOBEC3F and APOBEC3G) substrates. Interacts with host UBCE7IP1 isoform 3/ZIN and possibly with SAT. Interacts with host tyrosine kinases HCK and FYN; these interactions may decrease level of phosphorylated APOBEC3G incorporation into virions. Interacts with host ABCE1; this interaction may play a role in protecting viral RNA from damage during viral assembly. Interacts with host MDM2; this interaction targets Vif for degradation by the proteasome.</text>
</comment>
<comment type="subcellular location">
    <subcellularLocation>
        <location evidence="2">Host cytoplasm</location>
    </subcellularLocation>
    <subcellularLocation>
        <location evidence="2">Host cell membrane</location>
        <topology evidence="2">Peripheral membrane protein</topology>
        <orientation evidence="2">Cytoplasmic side</orientation>
    </subcellularLocation>
    <subcellularLocation>
        <location evidence="2">Virion</location>
    </subcellularLocation>
    <text evidence="2">In the cytoplasm, seems to colocalize with intermediate filament vimentin. A fraction is associated with the cytoplasmic side of cellular membranes, presumably via the interaction with Pr55Gag precursor. Incorporated in virions at a ratio of approximately 7 to 20 molecules per virion.</text>
</comment>
<comment type="induction">
    <text evidence="2">Expressed late during infection in a Rev-dependent manner.</text>
</comment>
<comment type="domain">
    <text evidence="2">The BC-like-box motif mediates the interaction with elongin BC complex.</text>
</comment>
<comment type="domain">
    <text evidence="2">The HCCH motif (H-x(5)-C-x(18)-C-x(5)-H) mediates the interaction with CUL5.</text>
</comment>
<comment type="PTM">
    <text evidence="2">Processed in virion by the viral protease.</text>
</comment>
<comment type="PTM">
    <text evidence="2">Highly phosphorylated on serine and threonine residues.</text>
</comment>
<comment type="PTM">
    <text evidence="2">Polyubiquitinated and degraded by the proteasome in the presence of APOBEC3G.</text>
</comment>
<comment type="miscellaneous">
    <text evidence="2">Vif-defective viruses show catastrophic failure in reverse transcription due to APOBEC-induced mutations that initiate a DNA base repair pathway and compromise the structural integrity of the ssDNA. In the absence of Vif, the virion is morphologically abnormal.</text>
</comment>
<comment type="miscellaneous">
    <text evidence="2">HIV-1 lineages are divided in three main groups, M (for Major), O (for Outlier), and N (for New, or Non-M, Non-O). The vast majority of strains found worldwide belong to the group M. Group O seems to be endemic to and largely confined to Cameroon and neighboring countries in West Central Africa, where these viruses represent a small minority of HIV-1 strains. The group N is represented by a limited number of isolates from Cameroonian persons. The group M is further subdivided in 9 clades or subtypes (A to D, F to H, J and K).</text>
</comment>
<comment type="miscellaneous">
    <text evidence="2">Required for replication in 'nonpermissive' cells, including primary T-cells, macrophages and certain T-cell lines, but is dispensable for replication in 'permissive' cell lines, such as 293T cells. In nonpermissive cells, Vif-defective viruses can produce virions, but they fail to complete reverse transcription and cannot successfully infect new cells.</text>
</comment>
<comment type="similarity">
    <text evidence="2">Belongs to the primate lentivirus group Vif protein family.</text>
</comment>
<evidence type="ECO:0000250" key="1">
    <source>
        <dbReference type="UniProtKB" id="O70897"/>
    </source>
</evidence>
<evidence type="ECO:0000255" key="2">
    <source>
        <dbReference type="HAMAP-Rule" id="MF_04081"/>
    </source>
</evidence>
<evidence type="ECO:0000256" key="3">
    <source>
        <dbReference type="SAM" id="MobiDB-lite"/>
    </source>
</evidence>
<keyword id="KW-0014">AIDS</keyword>
<keyword id="KW-1032">Host cell membrane</keyword>
<keyword id="KW-1035">Host cytoplasm</keyword>
<keyword id="KW-1043">Host membrane</keyword>
<keyword id="KW-0945">Host-virus interaction</keyword>
<keyword id="KW-0472">Membrane</keyword>
<keyword id="KW-0479">Metal-binding</keyword>
<keyword id="KW-0597">Phosphoprotein</keyword>
<keyword id="KW-0694">RNA-binding</keyword>
<keyword id="KW-0832">Ubl conjugation</keyword>
<keyword id="KW-0833">Ubl conjugation pathway</keyword>
<keyword id="KW-0946">Virion</keyword>
<keyword id="KW-0862">Zinc</keyword>
<dbReference type="EMBL" id="AF061642">
    <property type="protein sequence ID" value="AAC29061.1"/>
    <property type="molecule type" value="Genomic_DNA"/>
</dbReference>
<dbReference type="SMR" id="O89941"/>
<dbReference type="Proteomes" id="UP000135013">
    <property type="component" value="Segment"/>
</dbReference>
<dbReference type="GO" id="GO:0030430">
    <property type="term" value="C:host cell cytoplasm"/>
    <property type="evidence" value="ECO:0007669"/>
    <property type="project" value="UniProtKB-SubCell"/>
</dbReference>
<dbReference type="GO" id="GO:0020002">
    <property type="term" value="C:host cell plasma membrane"/>
    <property type="evidence" value="ECO:0007669"/>
    <property type="project" value="UniProtKB-SubCell"/>
</dbReference>
<dbReference type="GO" id="GO:0016020">
    <property type="term" value="C:membrane"/>
    <property type="evidence" value="ECO:0007669"/>
    <property type="project" value="UniProtKB-UniRule"/>
</dbReference>
<dbReference type="GO" id="GO:0044423">
    <property type="term" value="C:virion component"/>
    <property type="evidence" value="ECO:0007669"/>
    <property type="project" value="UniProtKB-UniRule"/>
</dbReference>
<dbReference type="GO" id="GO:0046872">
    <property type="term" value="F:metal ion binding"/>
    <property type="evidence" value="ECO:0007669"/>
    <property type="project" value="UniProtKB-KW"/>
</dbReference>
<dbReference type="GO" id="GO:0003723">
    <property type="term" value="F:RNA binding"/>
    <property type="evidence" value="ECO:0007669"/>
    <property type="project" value="UniProtKB-UniRule"/>
</dbReference>
<dbReference type="GO" id="GO:0019058">
    <property type="term" value="P:viral life cycle"/>
    <property type="evidence" value="ECO:0007669"/>
    <property type="project" value="InterPro"/>
</dbReference>
<dbReference type="HAMAP" id="MF_04081">
    <property type="entry name" value="HIV_VIF"/>
    <property type="match status" value="1"/>
</dbReference>
<dbReference type="InterPro" id="IPR000475">
    <property type="entry name" value="Vif"/>
</dbReference>
<dbReference type="Pfam" id="PF00559">
    <property type="entry name" value="Vif"/>
    <property type="match status" value="1"/>
</dbReference>
<dbReference type="PRINTS" id="PR00349">
    <property type="entry name" value="VIRIONINFFCT"/>
</dbReference>
<gene>
    <name evidence="2" type="primary">vif</name>
</gene>
<sequence length="192" mass="22663">MENRWQVMIVWQVDRMRIRTWHSLVKHHMYVSKKARGWFYRPHYASRHPRVSSEVHIPLGDATLVVTTYWGLHTGEKDWQLGHGVSIEWRQRRYRTQVEPDLADHLIHLHYFDCFSDSAIRKAILGQIVSPRCEYQAGHNQVGSLQYLALKVLVTSKRSRPPLPSVTELAEDRWNKPQKTRGHRENPTMNGH</sequence>
<feature type="chain" id="PRO_0000245135" description="Virion infectivity factor" evidence="2">
    <location>
        <begin position="1"/>
        <end position="192"/>
    </location>
</feature>
<feature type="chain" id="PRO_0000245136" description="p17" evidence="2">
    <location>
        <begin position="1"/>
        <end position="150"/>
    </location>
</feature>
<feature type="chain" id="PRO_0000245137" description="p7" evidence="2">
    <location>
        <begin position="151"/>
        <end position="192"/>
    </location>
</feature>
<feature type="region of interest" description="Interaction with host APOBEC3F; F1-box" evidence="2">
    <location>
        <begin position="14"/>
        <end position="17"/>
    </location>
</feature>
<feature type="region of interest" description="Interaction with host APOBEC3G; G-box" evidence="2">
    <location>
        <begin position="40"/>
        <end position="44"/>
    </location>
</feature>
<feature type="region of interest" description="Interaction with host APOBEC3F and APOBEC3G; FG-box" evidence="2">
    <location>
        <begin position="54"/>
        <end position="72"/>
    </location>
</feature>
<feature type="region of interest" description="Interaction with host APOBEC3F; F2-box" evidence="2">
    <location>
        <begin position="74"/>
        <end position="79"/>
    </location>
</feature>
<feature type="region of interest" description="RNA-binding" evidence="2">
    <location>
        <begin position="75"/>
        <end position="114"/>
    </location>
</feature>
<feature type="region of interest" description="SOCS box-like" evidence="2">
    <location>
        <begin position="151"/>
        <end position="180"/>
    </location>
</feature>
<feature type="region of interest" description="Multimerization" evidence="2">
    <location>
        <begin position="151"/>
        <end position="164"/>
    </location>
</feature>
<feature type="region of interest" description="Disordered" evidence="3">
    <location>
        <begin position="163"/>
        <end position="192"/>
    </location>
</feature>
<feature type="region of interest" description="Membrane association" evidence="2">
    <location>
        <begin position="171"/>
        <end position="172"/>
    </location>
</feature>
<feature type="short sequence motif" description="HCCH motif" evidence="2">
    <location>
        <begin position="108"/>
        <end position="139"/>
    </location>
</feature>
<feature type="short sequence motif" description="BC-box-like motif" evidence="2">
    <location>
        <begin position="144"/>
        <end position="153"/>
    </location>
</feature>
<feature type="binding site" evidence="2">
    <location>
        <position position="108"/>
    </location>
    <ligand>
        <name>Zn(2+)</name>
        <dbReference type="ChEBI" id="CHEBI:29105"/>
    </ligand>
</feature>
<feature type="binding site" evidence="2">
    <location>
        <position position="114"/>
    </location>
    <ligand>
        <name>Zn(2+)</name>
        <dbReference type="ChEBI" id="CHEBI:29105"/>
    </ligand>
</feature>
<feature type="binding site" evidence="2">
    <location>
        <position position="133"/>
    </location>
    <ligand>
        <name>Zn(2+)</name>
        <dbReference type="ChEBI" id="CHEBI:29105"/>
    </ligand>
</feature>
<feature type="binding site" evidence="2">
    <location>
        <position position="139"/>
    </location>
    <ligand>
        <name>Zn(2+)</name>
        <dbReference type="ChEBI" id="CHEBI:29105"/>
    </ligand>
</feature>
<feature type="site" description="Cleavage in virion (by viral protease)" evidence="2">
    <location>
        <begin position="150"/>
        <end position="151"/>
    </location>
</feature>
<feature type="modified residue" description="Phosphothreonine; by host MAP4K1" evidence="2">
    <location>
        <position position="96"/>
    </location>
</feature>
<feature type="modified residue" description="Phosphoserine; by host" evidence="2">
    <location>
        <position position="144"/>
    </location>
</feature>
<feature type="modified residue" description="Phosphothreonine; by host" evidence="2">
    <location>
        <position position="155"/>
    </location>
</feature>
<feature type="modified residue" description="Phosphoserine; by host MAP4K1" evidence="2">
    <location>
        <position position="165"/>
    </location>
</feature>
<feature type="modified residue" description="Phosphothreonine; by host" evidence="2">
    <location>
        <position position="188"/>
    </location>
</feature>
<name>VIF_HV1SE</name>
<organism>
    <name type="scientific">Human immunodeficiency virus type 1 group M subtype G (isolate SE6165)</name>
    <name type="common">HIV-1</name>
    <dbReference type="NCBI Taxonomy" id="388824"/>
    <lineage>
        <taxon>Viruses</taxon>
        <taxon>Riboviria</taxon>
        <taxon>Pararnavirae</taxon>
        <taxon>Artverviricota</taxon>
        <taxon>Revtraviricetes</taxon>
        <taxon>Ortervirales</taxon>
        <taxon>Retroviridae</taxon>
        <taxon>Orthoretrovirinae</taxon>
        <taxon>Lentivirus</taxon>
        <taxon>Human immunodeficiency virus type 1</taxon>
    </lineage>
</organism>
<reference key="1">
    <citation type="journal article" date="1998" name="Virology">
        <title>Full genome sequences of human immunodeficiency virus type 1 subtypes G and A/G intersubtype recombinants.</title>
        <authorList>
            <person name="Carr J.K."/>
            <person name="Salminen M.O."/>
            <person name="Albert J."/>
            <person name="Sanders-Buell E."/>
            <person name="Gotte D."/>
            <person name="Birx D.L."/>
            <person name="McCutchan F.E."/>
        </authorList>
    </citation>
    <scope>NUCLEOTIDE SEQUENCE [GENOMIC DNA]</scope>
</reference>
<protein>
    <recommendedName>
        <fullName evidence="2">Virion infectivity factor</fullName>
        <shortName evidence="2">Vif</shortName>
    </recommendedName>
    <alternativeName>
        <fullName evidence="2">SOR protein</fullName>
    </alternativeName>
    <component>
        <recommendedName>
            <fullName evidence="2">p17</fullName>
        </recommendedName>
    </component>
    <component>
        <recommendedName>
            <fullName evidence="2">p7</fullName>
        </recommendedName>
    </component>
</protein>
<proteinExistence type="inferred from homology"/>
<organismHost>
    <name type="scientific">Homo sapiens</name>
    <name type="common">Human</name>
    <dbReference type="NCBI Taxonomy" id="9606"/>
</organismHost>